<feature type="signal peptide" evidence="3">
    <location>
        <begin position="1"/>
        <end position="21"/>
    </location>
</feature>
<feature type="chain" id="PRO_0000017770" description="Hepatic triacylglycerol lipase">
    <location>
        <begin position="22"/>
        <end position="510"/>
    </location>
</feature>
<feature type="domain" description="PLAT" evidence="5">
    <location>
        <begin position="353"/>
        <end position="487"/>
    </location>
</feature>
<feature type="region of interest" description="Essential for determining substrate specificity" evidence="3">
    <location>
        <begin position="255"/>
        <end position="278"/>
    </location>
</feature>
<feature type="active site" description="Nucleophile" evidence="1">
    <location>
        <position position="169"/>
    </location>
</feature>
<feature type="active site" description="Charge relay system" evidence="6">
    <location>
        <position position="195"/>
    </location>
</feature>
<feature type="active site" description="Charge relay system" evidence="6">
    <location>
        <position position="280"/>
    </location>
</feature>
<feature type="glycosylation site" description="N-linked (GlcNAc...) asparagine" evidence="4">
    <location>
        <position position="79"/>
    </location>
</feature>
<feature type="glycosylation site" description="N-linked (GlcNAc...) asparagine" evidence="4">
    <location>
        <position position="398"/>
    </location>
</feature>
<feature type="sequence conflict" description="In Ref. 2; CAA41329." evidence="7" ref="2">
    <original>L</original>
    <variation>P</variation>
    <location>
        <position position="286"/>
    </location>
</feature>
<name>LIPC_MOUSE</name>
<comment type="function">
    <text evidence="2 3">Catalyzes the hydrolysis of triglycerides and phospholipids present in circulating plasma lipoproteins, including chylomicrons, intermediate density lipoproteins (IDL), low density lipoproteins (LDL) of large size and high density lipoproteins (HDL), releasing free fatty acids (FFA) and smaller lipoprotein particles (By similarity). Also exhibits lysophospholipase activity (By similarity). Can hydrolyze both neutral lipid and phospholipid substrates but shows a greater binding affinity for neutral lipid substrates than phospholipid substrates (By similarity). In native LDL, preferentially hydrolyzes the phosphatidylcholine species containing polyunsaturated fatty acids at sn-2 position (By similarity).</text>
</comment>
<comment type="catalytic activity">
    <reaction evidence="2">
        <text>a triacylglycerol + H2O = a diacylglycerol + a fatty acid + H(+)</text>
        <dbReference type="Rhea" id="RHEA:12044"/>
        <dbReference type="ChEBI" id="CHEBI:15377"/>
        <dbReference type="ChEBI" id="CHEBI:15378"/>
        <dbReference type="ChEBI" id="CHEBI:17855"/>
        <dbReference type="ChEBI" id="CHEBI:18035"/>
        <dbReference type="ChEBI" id="CHEBI:28868"/>
        <dbReference type="EC" id="3.1.1.3"/>
    </reaction>
</comment>
<comment type="catalytic activity">
    <reaction evidence="2">
        <text>a 1-acyl-sn-glycero-3-phosphocholine + H2O = sn-glycerol 3-phosphocholine + a fatty acid + H(+)</text>
        <dbReference type="Rhea" id="RHEA:15177"/>
        <dbReference type="ChEBI" id="CHEBI:15377"/>
        <dbReference type="ChEBI" id="CHEBI:15378"/>
        <dbReference type="ChEBI" id="CHEBI:16870"/>
        <dbReference type="ChEBI" id="CHEBI:28868"/>
        <dbReference type="ChEBI" id="CHEBI:58168"/>
        <dbReference type="EC" id="3.1.1.5"/>
    </reaction>
</comment>
<comment type="catalytic activity">
    <reaction evidence="2">
        <text>a 1,2-diacyl-sn-glycero-3-phosphocholine + H2O = a 2-acyl-sn-glycero-3-phosphocholine + a fatty acid + H(+)</text>
        <dbReference type="Rhea" id="RHEA:18689"/>
        <dbReference type="ChEBI" id="CHEBI:15377"/>
        <dbReference type="ChEBI" id="CHEBI:15378"/>
        <dbReference type="ChEBI" id="CHEBI:28868"/>
        <dbReference type="ChEBI" id="CHEBI:57643"/>
        <dbReference type="ChEBI" id="CHEBI:57875"/>
        <dbReference type="EC" id="3.1.1.32"/>
    </reaction>
</comment>
<comment type="catalytic activity">
    <reaction evidence="3">
        <text>1,2,3-tri-(9Z-octadecenoyl)-glycerol + H2O = di-(9Z)-octadecenoylglycerol + (9Z)-octadecenoate + H(+)</text>
        <dbReference type="Rhea" id="RHEA:38575"/>
        <dbReference type="ChEBI" id="CHEBI:15377"/>
        <dbReference type="ChEBI" id="CHEBI:15378"/>
        <dbReference type="ChEBI" id="CHEBI:30823"/>
        <dbReference type="ChEBI" id="CHEBI:53753"/>
        <dbReference type="ChEBI" id="CHEBI:75945"/>
    </reaction>
    <physiologicalReaction direction="left-to-right" evidence="3">
        <dbReference type="Rhea" id="RHEA:38576"/>
    </physiologicalReaction>
</comment>
<comment type="catalytic activity">
    <reaction evidence="3">
        <text>1,2-di-(9Z-octadecenoyl)-sn-glycero-3-phosphocholine + H2O = (9Z-octadecenoyl)-sn-glycero-3-phosphocholine + (9Z)-octadecenoate + H(+)</text>
        <dbReference type="Rhea" id="RHEA:38699"/>
        <dbReference type="ChEBI" id="CHEBI:15377"/>
        <dbReference type="ChEBI" id="CHEBI:15378"/>
        <dbReference type="ChEBI" id="CHEBI:30823"/>
        <dbReference type="ChEBI" id="CHEBI:74669"/>
        <dbReference type="ChEBI" id="CHEBI:76083"/>
    </reaction>
    <physiologicalReaction direction="left-to-right" evidence="3">
        <dbReference type="Rhea" id="RHEA:38700"/>
    </physiologicalReaction>
</comment>
<comment type="catalytic activity">
    <reaction evidence="3">
        <text>1,2,3-tributanoylglycerol + H2O = dibutanoylglycerol + butanoate + H(+)</text>
        <dbReference type="Rhea" id="RHEA:40475"/>
        <dbReference type="ChEBI" id="CHEBI:15377"/>
        <dbReference type="ChEBI" id="CHEBI:15378"/>
        <dbReference type="ChEBI" id="CHEBI:17968"/>
        <dbReference type="ChEBI" id="CHEBI:35020"/>
        <dbReference type="ChEBI" id="CHEBI:76478"/>
    </reaction>
    <physiologicalReaction direction="left-to-right" evidence="3">
        <dbReference type="Rhea" id="RHEA:40476"/>
    </physiologicalReaction>
</comment>
<comment type="catalytic activity">
    <reaction evidence="3">
        <text>1,2-dihexadecanoyl-sn-glycero-3-phosphocholine + H2O = hexadecanoyl-sn-glycero-3-phosphocholine + hexadecanoate + H(+)</text>
        <dbReference type="Rhea" id="RHEA:41384"/>
        <dbReference type="ChEBI" id="CHEBI:7896"/>
        <dbReference type="ChEBI" id="CHEBI:15377"/>
        <dbReference type="ChEBI" id="CHEBI:15378"/>
        <dbReference type="ChEBI" id="CHEBI:64563"/>
        <dbReference type="ChEBI" id="CHEBI:72999"/>
    </reaction>
    <physiologicalReaction direction="left-to-right" evidence="3">
        <dbReference type="Rhea" id="RHEA:41385"/>
    </physiologicalReaction>
</comment>
<comment type="catalytic activity">
    <reaction evidence="2">
        <text>1,2-di-(9Z-octadecenoyl)-sn-glycerol + H2O = 2-(9Z-octadecenoyl)-glycerol + (9Z)-octadecenoate + H(+)</text>
        <dbReference type="Rhea" id="RHEA:38511"/>
        <dbReference type="ChEBI" id="CHEBI:15377"/>
        <dbReference type="ChEBI" id="CHEBI:15378"/>
        <dbReference type="ChEBI" id="CHEBI:30823"/>
        <dbReference type="ChEBI" id="CHEBI:52333"/>
        <dbReference type="ChEBI" id="CHEBI:73990"/>
    </reaction>
    <physiologicalReaction direction="left-to-right" evidence="2">
        <dbReference type="Rhea" id="RHEA:38512"/>
    </physiologicalReaction>
</comment>
<comment type="catalytic activity">
    <reaction evidence="2">
        <text>1,2,3-tri-(9Z-octadecenoyl)-glycerol + H2O = 2,3-di-(9Z)-octadecenoyl-sn-glycerol + (9Z)-octadecenoate + H(+)</text>
        <dbReference type="Rhea" id="RHEA:38391"/>
        <dbReference type="ChEBI" id="CHEBI:15377"/>
        <dbReference type="ChEBI" id="CHEBI:15378"/>
        <dbReference type="ChEBI" id="CHEBI:30823"/>
        <dbReference type="ChEBI" id="CHEBI:53753"/>
        <dbReference type="ChEBI" id="CHEBI:75824"/>
    </reaction>
    <physiologicalReaction direction="left-to-right" evidence="2">
        <dbReference type="Rhea" id="RHEA:38392"/>
    </physiologicalReaction>
</comment>
<comment type="catalytic activity">
    <reaction evidence="2">
        <text>1-(9Z-octadecenoyl)-sn-glycero-3-phospho-L-serine + H2O = sn-glycero-3-phospho-L-serine + (9Z)-octadecenoate + H(+)</text>
        <dbReference type="Rhea" id="RHEA:40499"/>
        <dbReference type="ChEBI" id="CHEBI:15377"/>
        <dbReference type="ChEBI" id="CHEBI:15378"/>
        <dbReference type="ChEBI" id="CHEBI:30823"/>
        <dbReference type="ChEBI" id="CHEBI:64765"/>
        <dbReference type="ChEBI" id="CHEBI:74617"/>
    </reaction>
    <physiologicalReaction direction="left-to-right" evidence="2">
        <dbReference type="Rhea" id="RHEA:40500"/>
    </physiologicalReaction>
</comment>
<comment type="catalytic activity">
    <reaction evidence="2">
        <text>1-hexadecanoyl-sn-glycero-3-phosphocholine + H2O = sn-glycerol 3-phosphocholine + hexadecanoate + H(+)</text>
        <dbReference type="Rhea" id="RHEA:40435"/>
        <dbReference type="ChEBI" id="CHEBI:7896"/>
        <dbReference type="ChEBI" id="CHEBI:15377"/>
        <dbReference type="ChEBI" id="CHEBI:15378"/>
        <dbReference type="ChEBI" id="CHEBI:16870"/>
        <dbReference type="ChEBI" id="CHEBI:72998"/>
    </reaction>
    <physiologicalReaction direction="left-to-right" evidence="2">
        <dbReference type="Rhea" id="RHEA:40436"/>
    </physiologicalReaction>
</comment>
<comment type="catalytic activity">
    <reaction evidence="2">
        <text>1,3-di-(9Z-octadecenoyl)-glycerol + H2O = 3-(9Z-octadecenoyl)-sn-glycerol + (9Z)-octadecenoate + H(+)</text>
        <dbReference type="Rhea" id="RHEA:38651"/>
        <dbReference type="ChEBI" id="CHEBI:15377"/>
        <dbReference type="ChEBI" id="CHEBI:15378"/>
        <dbReference type="ChEBI" id="CHEBI:30823"/>
        <dbReference type="ChEBI" id="CHEBI:75735"/>
        <dbReference type="ChEBI" id="CHEBI:75938"/>
    </reaction>
    <physiologicalReaction direction="left-to-right" evidence="2">
        <dbReference type="Rhea" id="RHEA:38652"/>
    </physiologicalReaction>
</comment>
<comment type="subunit">
    <text evidence="3">Homodimer.</text>
</comment>
<comment type="subcellular location">
    <subcellularLocation>
        <location evidence="3">Secreted</location>
    </subcellularLocation>
</comment>
<comment type="similarity">
    <text evidence="7">Belongs to the AB hydrolase superfamily. Lipase family.</text>
</comment>
<accession>P27656</accession>
<accession>Q8VC44</accession>
<keyword id="KW-0325">Glycoprotein</keyword>
<keyword id="KW-0345">HDL</keyword>
<keyword id="KW-0358">Heparin-binding</keyword>
<keyword id="KW-0378">Hydrolase</keyword>
<keyword id="KW-0442">Lipid degradation</keyword>
<keyword id="KW-0443">Lipid metabolism</keyword>
<keyword id="KW-1185">Reference proteome</keyword>
<keyword id="KW-0964">Secreted</keyword>
<keyword id="KW-0732">Signal</keyword>
<gene>
    <name type="primary">Lipc</name>
    <name type="synonym">Hpl</name>
</gene>
<sequence>MGNPLQISIFLVFCIFIQSSACGQGVGTEPFGRSLGATEASKPLKKPETRFLLFQDENDRLGCRLRPQHPETLQECGFNSSQPLIMIIHGWSVDGLLENWIWKIVSALKSRQSQPVNVGLVDWISLAYQHYTIAVQNTRIVGQDVAALLLWLEESAKFSRSKVHLIGYSLGAHVSGFAGSSMDGKNKIGRITGLDPAGPMFEGTSPNERLSPDDANFVDAIHTFTREHMGLSVGIKQPIAHYDFYPNGGSFQPGCHFLELYKHIAEHGLNAITQTIKCAHERSVHLFIDSLQHSDLQSIGFQCSDMGSFSQGLCLSCKKGRCNTLGYDIRKDRSGKSKRLFLITRAQSPFKVYHYQFKIQFINQIEKPVEPTFTMSLLGTKEEIKRIPITLGEGITSNKTYSFLITLDKDIGELILLKFKWENSAVWANVWNTVQTIMLWGIEPHHSGLILKTIWVKAGETQQRMTFCPENLDDLQLHPSQEKVFVNCEVKSKRLTESKEQMSQETHAKK</sequence>
<protein>
    <recommendedName>
        <fullName>Hepatic triacylglycerol lipase</fullName>
        <shortName>HL</shortName>
        <shortName>Hepatic lipase</shortName>
        <ecNumber evidence="2">3.1.1.3</ecNumber>
    </recommendedName>
    <alternativeName>
        <fullName>Lipase member C</fullName>
    </alternativeName>
    <alternativeName>
        <fullName>Lysophospholipase</fullName>
        <ecNumber evidence="2">3.1.1.5</ecNumber>
    </alternativeName>
    <alternativeName>
        <fullName>Phospholipase A1</fullName>
        <ecNumber evidence="2">3.1.1.32</ecNumber>
    </alternativeName>
</protein>
<dbReference type="EC" id="3.1.1.3" evidence="2"/>
<dbReference type="EC" id="3.1.1.5" evidence="2"/>
<dbReference type="EC" id="3.1.1.32" evidence="2"/>
<dbReference type="EMBL" id="AY228765">
    <property type="protein sequence ID" value="AAO73443.1"/>
    <property type="molecule type" value="mRNA"/>
</dbReference>
<dbReference type="EMBL" id="X58426">
    <property type="protein sequence ID" value="CAA41329.1"/>
    <property type="molecule type" value="mRNA"/>
</dbReference>
<dbReference type="EMBL" id="CH466522">
    <property type="protein sequence ID" value="EDL26212.1"/>
    <property type="molecule type" value="Genomic_DNA"/>
</dbReference>
<dbReference type="EMBL" id="BC021841">
    <property type="protein sequence ID" value="AAH21841.1"/>
    <property type="molecule type" value="mRNA"/>
</dbReference>
<dbReference type="EMBL" id="BC094050">
    <property type="protein sequence ID" value="AAH94050.1"/>
    <property type="molecule type" value="mRNA"/>
</dbReference>
<dbReference type="CCDS" id="CCDS23324.1"/>
<dbReference type="PIR" id="S15893">
    <property type="entry name" value="S15893"/>
</dbReference>
<dbReference type="RefSeq" id="NP_001311401.1">
    <property type="nucleotide sequence ID" value="NM_001324472.1"/>
</dbReference>
<dbReference type="RefSeq" id="NP_001311402.1">
    <property type="nucleotide sequence ID" value="NM_001324473.1"/>
</dbReference>
<dbReference type="RefSeq" id="NP_001398716.1">
    <property type="nucleotide sequence ID" value="NM_001411787.1"/>
</dbReference>
<dbReference type="RefSeq" id="NP_032306.2">
    <property type="nucleotide sequence ID" value="NM_008280.2"/>
</dbReference>
<dbReference type="SMR" id="P27656"/>
<dbReference type="BioGRID" id="200409">
    <property type="interactions" value="28"/>
</dbReference>
<dbReference type="FunCoup" id="P27656">
    <property type="interactions" value="107"/>
</dbReference>
<dbReference type="STRING" id="10090.ENSMUSP00000034731"/>
<dbReference type="ESTHER" id="mouse-1hlip">
    <property type="family name" value="Hepatic_Lipase"/>
</dbReference>
<dbReference type="GlyCosmos" id="P27656">
    <property type="glycosylation" value="2 sites, No reported glycans"/>
</dbReference>
<dbReference type="GlyGen" id="P27656">
    <property type="glycosylation" value="2 sites"/>
</dbReference>
<dbReference type="PhosphoSitePlus" id="P27656"/>
<dbReference type="PaxDb" id="10090-ENSMUSP00000034731"/>
<dbReference type="ProteomicsDB" id="290030"/>
<dbReference type="Antibodypedia" id="4249">
    <property type="antibodies" value="374 antibodies from 30 providers"/>
</dbReference>
<dbReference type="DNASU" id="15450"/>
<dbReference type="Ensembl" id="ENSMUST00000034731.10">
    <property type="protein sequence ID" value="ENSMUSP00000034731.9"/>
    <property type="gene ID" value="ENSMUSG00000032207.11"/>
</dbReference>
<dbReference type="GeneID" id="15450"/>
<dbReference type="KEGG" id="mmu:15450"/>
<dbReference type="UCSC" id="uc009qos.1">
    <property type="organism name" value="mouse"/>
</dbReference>
<dbReference type="AGR" id="MGI:96216"/>
<dbReference type="CTD" id="3990"/>
<dbReference type="MGI" id="MGI:96216">
    <property type="gene designation" value="Lipc"/>
</dbReference>
<dbReference type="VEuPathDB" id="HostDB:ENSMUSG00000032207"/>
<dbReference type="eggNOG" id="ENOG502QVTG">
    <property type="taxonomic scope" value="Eukaryota"/>
</dbReference>
<dbReference type="GeneTree" id="ENSGT00940000157602"/>
<dbReference type="HOGENOM" id="CLU_027171_1_1_1"/>
<dbReference type="InParanoid" id="P27656"/>
<dbReference type="OMA" id="FVRCKED"/>
<dbReference type="OrthoDB" id="199913at2759"/>
<dbReference type="PhylomeDB" id="P27656"/>
<dbReference type="TreeFam" id="TF324997"/>
<dbReference type="Reactome" id="R-MMU-8963889">
    <property type="pathway name" value="Assembly of active LPL and LIPC lipase complexes"/>
</dbReference>
<dbReference type="Reactome" id="R-MMU-8964026">
    <property type="pathway name" value="Chylomicron clearance"/>
</dbReference>
<dbReference type="BioGRID-ORCS" id="15450">
    <property type="hits" value="6 hits in 80 CRISPR screens"/>
</dbReference>
<dbReference type="PRO" id="PR:P27656"/>
<dbReference type="Proteomes" id="UP000000589">
    <property type="component" value="Chromosome 9"/>
</dbReference>
<dbReference type="RNAct" id="P27656">
    <property type="molecule type" value="protein"/>
</dbReference>
<dbReference type="Bgee" id="ENSMUSG00000032207">
    <property type="expression patterns" value="Expressed in left lobe of liver and 45 other cell types or tissues"/>
</dbReference>
<dbReference type="ExpressionAtlas" id="P27656">
    <property type="expression patterns" value="baseline and differential"/>
</dbReference>
<dbReference type="GO" id="GO:0005615">
    <property type="term" value="C:extracellular space"/>
    <property type="evidence" value="ECO:0000314"/>
    <property type="project" value="MGI"/>
</dbReference>
<dbReference type="GO" id="GO:0034364">
    <property type="term" value="C:high-density lipoprotein particle"/>
    <property type="evidence" value="ECO:0007669"/>
    <property type="project" value="UniProtKB-KW"/>
</dbReference>
<dbReference type="GO" id="GO:0008201">
    <property type="term" value="F:heparin binding"/>
    <property type="evidence" value="ECO:0007669"/>
    <property type="project" value="UniProtKB-KW"/>
</dbReference>
<dbReference type="GO" id="GO:0016298">
    <property type="term" value="F:lipase activity"/>
    <property type="evidence" value="ECO:0000314"/>
    <property type="project" value="MGI"/>
</dbReference>
<dbReference type="GO" id="GO:0004622">
    <property type="term" value="F:lysophospholipase activity"/>
    <property type="evidence" value="ECO:0007669"/>
    <property type="project" value="UniProtKB-EC"/>
</dbReference>
<dbReference type="GO" id="GO:0008970">
    <property type="term" value="F:phospholipase A1 activity"/>
    <property type="evidence" value="ECO:0000250"/>
    <property type="project" value="UniProtKB"/>
</dbReference>
<dbReference type="GO" id="GO:0004806">
    <property type="term" value="F:triacylglycerol lipase activity"/>
    <property type="evidence" value="ECO:0000250"/>
    <property type="project" value="UniProtKB"/>
</dbReference>
<dbReference type="GO" id="GO:0042632">
    <property type="term" value="P:cholesterol homeostasis"/>
    <property type="evidence" value="ECO:0000316"/>
    <property type="project" value="MGI"/>
</dbReference>
<dbReference type="GO" id="GO:0008203">
    <property type="term" value="P:cholesterol metabolic process"/>
    <property type="evidence" value="ECO:0000316"/>
    <property type="project" value="MGI"/>
</dbReference>
<dbReference type="GO" id="GO:0030301">
    <property type="term" value="P:cholesterol transport"/>
    <property type="evidence" value="ECO:0000315"/>
    <property type="project" value="MGI"/>
</dbReference>
<dbReference type="GO" id="GO:0006633">
    <property type="term" value="P:fatty acid biosynthetic process"/>
    <property type="evidence" value="ECO:0007669"/>
    <property type="project" value="Ensembl"/>
</dbReference>
<dbReference type="GO" id="GO:0034375">
    <property type="term" value="P:high-density lipoprotein particle remodeling"/>
    <property type="evidence" value="ECO:0007669"/>
    <property type="project" value="Ensembl"/>
</dbReference>
<dbReference type="GO" id="GO:0034374">
    <property type="term" value="P:low-density lipoprotein particle remodeling"/>
    <property type="evidence" value="ECO:0007669"/>
    <property type="project" value="Ensembl"/>
</dbReference>
<dbReference type="GO" id="GO:0019433">
    <property type="term" value="P:triglyceride catabolic process"/>
    <property type="evidence" value="ECO:0007669"/>
    <property type="project" value="Ensembl"/>
</dbReference>
<dbReference type="GO" id="GO:0070328">
    <property type="term" value="P:triglyceride homeostasis"/>
    <property type="evidence" value="ECO:0007669"/>
    <property type="project" value="Ensembl"/>
</dbReference>
<dbReference type="GO" id="GO:0034372">
    <property type="term" value="P:very-low-density lipoprotein particle remodeling"/>
    <property type="evidence" value="ECO:0007669"/>
    <property type="project" value="Ensembl"/>
</dbReference>
<dbReference type="CDD" id="cd00707">
    <property type="entry name" value="Pancreat_lipase_like"/>
    <property type="match status" value="1"/>
</dbReference>
<dbReference type="CDD" id="cd01758">
    <property type="entry name" value="PLAT_LPL"/>
    <property type="match status" value="1"/>
</dbReference>
<dbReference type="FunFam" id="3.40.50.1820:FF:000101">
    <property type="entry name" value="Hepatic triacylglycerol lipase"/>
    <property type="match status" value="1"/>
</dbReference>
<dbReference type="FunFam" id="2.60.60.20:FF:000010">
    <property type="entry name" value="hepatic triacylglycerol lipase"/>
    <property type="match status" value="1"/>
</dbReference>
<dbReference type="Gene3D" id="3.40.50.1820">
    <property type="entry name" value="alpha/beta hydrolase"/>
    <property type="match status" value="1"/>
</dbReference>
<dbReference type="Gene3D" id="2.60.60.20">
    <property type="entry name" value="PLAT/LH2 domain"/>
    <property type="match status" value="1"/>
</dbReference>
<dbReference type="InterPro" id="IPR029058">
    <property type="entry name" value="AB_hydrolase_fold"/>
</dbReference>
<dbReference type="InterPro" id="IPR013818">
    <property type="entry name" value="Lipase"/>
</dbReference>
<dbReference type="InterPro" id="IPR002333">
    <property type="entry name" value="Lipase_hep"/>
</dbReference>
<dbReference type="InterPro" id="IPR016272">
    <property type="entry name" value="Lipase_LIPH"/>
</dbReference>
<dbReference type="InterPro" id="IPR033906">
    <property type="entry name" value="Lipase_N"/>
</dbReference>
<dbReference type="InterPro" id="IPR001024">
    <property type="entry name" value="PLAT/LH2_dom"/>
</dbReference>
<dbReference type="InterPro" id="IPR036392">
    <property type="entry name" value="PLAT/LH2_dom_sf"/>
</dbReference>
<dbReference type="InterPro" id="IPR000734">
    <property type="entry name" value="TAG_lipase"/>
</dbReference>
<dbReference type="PANTHER" id="PTHR11610:SF2">
    <property type="entry name" value="HEPATIC TRIACYLGLYCEROL LIPASE"/>
    <property type="match status" value="1"/>
</dbReference>
<dbReference type="PANTHER" id="PTHR11610">
    <property type="entry name" value="LIPASE"/>
    <property type="match status" value="1"/>
</dbReference>
<dbReference type="Pfam" id="PF00151">
    <property type="entry name" value="Lipase"/>
    <property type="match status" value="1"/>
</dbReference>
<dbReference type="Pfam" id="PF01477">
    <property type="entry name" value="PLAT"/>
    <property type="match status" value="1"/>
</dbReference>
<dbReference type="PIRSF" id="PIRSF000865">
    <property type="entry name" value="Lipoprotein_lipase_LIPH"/>
    <property type="match status" value="1"/>
</dbReference>
<dbReference type="PRINTS" id="PR00824">
    <property type="entry name" value="HEPLIPASE"/>
</dbReference>
<dbReference type="PRINTS" id="PR00821">
    <property type="entry name" value="TAGLIPASE"/>
</dbReference>
<dbReference type="SMART" id="SM00308">
    <property type="entry name" value="LH2"/>
    <property type="match status" value="1"/>
</dbReference>
<dbReference type="SUPFAM" id="SSF53474">
    <property type="entry name" value="alpha/beta-Hydrolases"/>
    <property type="match status" value="1"/>
</dbReference>
<dbReference type="SUPFAM" id="SSF49723">
    <property type="entry name" value="Lipase/lipooxygenase domain (PLAT/LH2 domain)"/>
    <property type="match status" value="1"/>
</dbReference>
<dbReference type="PROSITE" id="PS00120">
    <property type="entry name" value="LIPASE_SER"/>
    <property type="match status" value="1"/>
</dbReference>
<dbReference type="PROSITE" id="PS50095">
    <property type="entry name" value="PLAT"/>
    <property type="match status" value="1"/>
</dbReference>
<organism>
    <name type="scientific">Mus musculus</name>
    <name type="common">Mouse</name>
    <dbReference type="NCBI Taxonomy" id="10090"/>
    <lineage>
        <taxon>Eukaryota</taxon>
        <taxon>Metazoa</taxon>
        <taxon>Chordata</taxon>
        <taxon>Craniata</taxon>
        <taxon>Vertebrata</taxon>
        <taxon>Euteleostomi</taxon>
        <taxon>Mammalia</taxon>
        <taxon>Eutheria</taxon>
        <taxon>Euarchontoglires</taxon>
        <taxon>Glires</taxon>
        <taxon>Rodentia</taxon>
        <taxon>Myomorpha</taxon>
        <taxon>Muroidea</taxon>
        <taxon>Muridae</taxon>
        <taxon>Murinae</taxon>
        <taxon>Mus</taxon>
        <taxon>Mus</taxon>
    </lineage>
</organism>
<reference key="1">
    <citation type="journal article" date="1991" name="Biochim. Biophys. Acta">
        <title>Molecular cloning of mouse hepatic triacylglycerol lipase: gene expression in combined lipase-deficient (cld/cld) mice.</title>
        <authorList>
            <person name="Oka K."/>
            <person name="Nakano T."/>
            <person name="Tkalcevic G.T."/>
            <person name="Scow R.O."/>
            <person name="Brown W.V."/>
        </authorList>
    </citation>
    <scope>NUCLEOTIDE SEQUENCE [MRNA]</scope>
</reference>
<reference key="2">
    <citation type="journal article" date="1991" name="FEBS Lett.">
        <title>Characterization of cDNA encoding the mouse hepatic triglyceride lipase and expression by in vitro translation.</title>
        <authorList>
            <person name="Chang S.F."/>
            <person name="Netter H.J."/>
            <person name="Will H."/>
        </authorList>
    </citation>
    <scope>NUCLEOTIDE SEQUENCE [MRNA]</scope>
    <source>
        <strain>C57BL/6 X CBA</strain>
        <tissue>Liver</tissue>
    </source>
</reference>
<reference key="3">
    <citation type="submission" date="2003-02" db="EMBL/GenBank/DDBJ databases">
        <authorList>
            <person name="Mural R.J."/>
            <person name="Adams M.D."/>
            <person name="Myers E.W."/>
            <person name="Smith H.O."/>
            <person name="Venter J.C."/>
        </authorList>
    </citation>
    <scope>NUCLEOTIDE SEQUENCE [LARGE SCALE GENOMIC DNA]</scope>
</reference>
<reference key="4">
    <citation type="journal article" date="2004" name="Genome Res.">
        <title>The status, quality, and expansion of the NIH full-length cDNA project: the Mammalian Gene Collection (MGC).</title>
        <authorList>
            <consortium name="The MGC Project Team"/>
        </authorList>
    </citation>
    <scope>NUCLEOTIDE SEQUENCE [LARGE SCALE MRNA]</scope>
    <source>
        <strain>FVB/N</strain>
        <tissue>Liver</tissue>
    </source>
</reference>
<evidence type="ECO:0000250" key="1"/>
<evidence type="ECO:0000250" key="2">
    <source>
        <dbReference type="UniProtKB" id="P07867"/>
    </source>
</evidence>
<evidence type="ECO:0000250" key="3">
    <source>
        <dbReference type="UniProtKB" id="P11150"/>
    </source>
</evidence>
<evidence type="ECO:0000255" key="4"/>
<evidence type="ECO:0000255" key="5">
    <source>
        <dbReference type="PROSITE-ProRule" id="PRU00152"/>
    </source>
</evidence>
<evidence type="ECO:0000255" key="6">
    <source>
        <dbReference type="PROSITE-ProRule" id="PRU10037"/>
    </source>
</evidence>
<evidence type="ECO:0000305" key="7"/>
<proteinExistence type="evidence at transcript level"/>